<feature type="chain" id="PRO_0000179935" description="2,3-bisphosphoglycerate-dependent phosphoglycerate mutase">
    <location>
        <begin position="1"/>
        <end position="221"/>
    </location>
</feature>
<feature type="region of interest" description="Disordered" evidence="2">
    <location>
        <begin position="114"/>
        <end position="140"/>
    </location>
</feature>
<feature type="active site" description="Tele-phosphohistidine intermediate" evidence="1">
    <location>
        <position position="9"/>
    </location>
</feature>
<feature type="active site" description="Proton donor/acceptor" evidence="1">
    <location>
        <position position="87"/>
    </location>
</feature>
<feature type="binding site" evidence="1">
    <location>
        <begin position="8"/>
        <end position="15"/>
    </location>
    <ligand>
        <name>substrate</name>
    </ligand>
</feature>
<feature type="binding site" evidence="1">
    <location>
        <begin position="21"/>
        <end position="22"/>
    </location>
    <ligand>
        <name>substrate</name>
    </ligand>
</feature>
<feature type="binding site" evidence="1">
    <location>
        <position position="60"/>
    </location>
    <ligand>
        <name>substrate</name>
    </ligand>
</feature>
<feature type="binding site" evidence="1">
    <location>
        <begin position="87"/>
        <end position="90"/>
    </location>
    <ligand>
        <name>substrate</name>
    </ligand>
</feature>
<feature type="binding site" evidence="1">
    <location>
        <position position="98"/>
    </location>
    <ligand>
        <name>substrate</name>
    </ligand>
</feature>
<feature type="binding site" evidence="1">
    <location>
        <begin position="114"/>
        <end position="115"/>
    </location>
    <ligand>
        <name>substrate</name>
    </ligand>
</feature>
<feature type="binding site" evidence="1">
    <location>
        <begin position="174"/>
        <end position="175"/>
    </location>
    <ligand>
        <name>substrate</name>
    </ligand>
</feature>
<feature type="site" description="Transition state stabilizer" evidence="1">
    <location>
        <position position="173"/>
    </location>
</feature>
<organism>
    <name type="scientific">Tropheryma whipplei (strain TW08/27)</name>
    <name type="common">Whipple's bacillus</name>
    <dbReference type="NCBI Taxonomy" id="218496"/>
    <lineage>
        <taxon>Bacteria</taxon>
        <taxon>Bacillati</taxon>
        <taxon>Actinomycetota</taxon>
        <taxon>Actinomycetes</taxon>
        <taxon>Micrococcales</taxon>
        <taxon>Tropherymataceae</taxon>
        <taxon>Tropheryma</taxon>
    </lineage>
</organism>
<reference key="1">
    <citation type="journal article" date="2003" name="Lancet">
        <title>Sequencing and analysis of the genome of the Whipple's disease bacterium Tropheryma whipplei.</title>
        <authorList>
            <person name="Bentley S.D."/>
            <person name="Maiwald M."/>
            <person name="Murphy L.D."/>
            <person name="Pallen M.J."/>
            <person name="Yeats C.A."/>
            <person name="Dover L.G."/>
            <person name="Norbertczak H.T."/>
            <person name="Besra G.S."/>
            <person name="Quail M.A."/>
            <person name="Harris D.E."/>
            <person name="von Herbay A."/>
            <person name="Goble A."/>
            <person name="Rutter S."/>
            <person name="Squares R."/>
            <person name="Squares S."/>
            <person name="Barrell B.G."/>
            <person name="Parkhill J."/>
            <person name="Relman D.A."/>
        </authorList>
    </citation>
    <scope>NUCLEOTIDE SEQUENCE [LARGE SCALE GENOMIC DNA]</scope>
    <source>
        <strain>TW08/27</strain>
    </source>
</reference>
<gene>
    <name evidence="1" type="primary">gpmA</name>
    <name type="synonym">pgm</name>
    <name type="ordered locus">TW678</name>
</gene>
<evidence type="ECO:0000255" key="1">
    <source>
        <dbReference type="HAMAP-Rule" id="MF_01039"/>
    </source>
</evidence>
<evidence type="ECO:0000256" key="2">
    <source>
        <dbReference type="SAM" id="MobiDB-lite"/>
    </source>
</evidence>
<dbReference type="EC" id="5.4.2.11" evidence="1"/>
<dbReference type="EMBL" id="BX251412">
    <property type="protein sequence ID" value="CAD67337.1"/>
    <property type="molecule type" value="Genomic_DNA"/>
</dbReference>
<dbReference type="RefSeq" id="WP_011096615.1">
    <property type="nucleotide sequence ID" value="NC_004551.1"/>
</dbReference>
<dbReference type="SMR" id="Q83HD5"/>
<dbReference type="GeneID" id="67388454"/>
<dbReference type="KEGG" id="tws:TW678"/>
<dbReference type="HOGENOM" id="CLU_033323_1_1_11"/>
<dbReference type="UniPathway" id="UPA00109">
    <property type="reaction ID" value="UER00186"/>
</dbReference>
<dbReference type="GO" id="GO:0004619">
    <property type="term" value="F:phosphoglycerate mutase activity"/>
    <property type="evidence" value="ECO:0007669"/>
    <property type="project" value="UniProtKB-EC"/>
</dbReference>
<dbReference type="GO" id="GO:0006094">
    <property type="term" value="P:gluconeogenesis"/>
    <property type="evidence" value="ECO:0007669"/>
    <property type="project" value="UniProtKB-UniRule"/>
</dbReference>
<dbReference type="GO" id="GO:0006096">
    <property type="term" value="P:glycolytic process"/>
    <property type="evidence" value="ECO:0007669"/>
    <property type="project" value="UniProtKB-UniRule"/>
</dbReference>
<dbReference type="CDD" id="cd07067">
    <property type="entry name" value="HP_PGM_like"/>
    <property type="match status" value="1"/>
</dbReference>
<dbReference type="Gene3D" id="3.40.50.1240">
    <property type="entry name" value="Phosphoglycerate mutase-like"/>
    <property type="match status" value="1"/>
</dbReference>
<dbReference type="HAMAP" id="MF_01039">
    <property type="entry name" value="PGAM_GpmA"/>
    <property type="match status" value="1"/>
</dbReference>
<dbReference type="InterPro" id="IPR013078">
    <property type="entry name" value="His_Pase_superF_clade-1"/>
</dbReference>
<dbReference type="InterPro" id="IPR029033">
    <property type="entry name" value="His_PPase_superfam"/>
</dbReference>
<dbReference type="InterPro" id="IPR005952">
    <property type="entry name" value="Phosphogly_mut1"/>
</dbReference>
<dbReference type="NCBIfam" id="TIGR01258">
    <property type="entry name" value="pgm_1"/>
    <property type="match status" value="1"/>
</dbReference>
<dbReference type="PANTHER" id="PTHR11931">
    <property type="entry name" value="PHOSPHOGLYCERATE MUTASE"/>
    <property type="match status" value="1"/>
</dbReference>
<dbReference type="Pfam" id="PF00300">
    <property type="entry name" value="His_Phos_1"/>
    <property type="match status" value="1"/>
</dbReference>
<dbReference type="PIRSF" id="PIRSF000709">
    <property type="entry name" value="6PFK_2-Ptase"/>
    <property type="match status" value="1"/>
</dbReference>
<dbReference type="SMART" id="SM00855">
    <property type="entry name" value="PGAM"/>
    <property type="match status" value="1"/>
</dbReference>
<dbReference type="SUPFAM" id="SSF53254">
    <property type="entry name" value="Phosphoglycerate mutase-like"/>
    <property type="match status" value="1"/>
</dbReference>
<comment type="function">
    <text evidence="1">Catalyzes the interconversion of 2-phosphoglycerate and 3-phosphoglycerate.</text>
</comment>
<comment type="catalytic activity">
    <reaction evidence="1">
        <text>(2R)-2-phosphoglycerate = (2R)-3-phosphoglycerate</text>
        <dbReference type="Rhea" id="RHEA:15901"/>
        <dbReference type="ChEBI" id="CHEBI:58272"/>
        <dbReference type="ChEBI" id="CHEBI:58289"/>
        <dbReference type="EC" id="5.4.2.11"/>
    </reaction>
</comment>
<comment type="pathway">
    <text evidence="1">Carbohydrate degradation; glycolysis; pyruvate from D-glyceraldehyde 3-phosphate: step 3/5.</text>
</comment>
<comment type="similarity">
    <text evidence="1">Belongs to the phosphoglycerate mutase family. BPG-dependent PGAM subfamily.</text>
</comment>
<proteinExistence type="inferred from homology"/>
<sequence>MDNLVLLRHGNSLWNQENLFTGWVDVRLSELGEKEAKTAGQLLREANRYPDVLFTSLLTRSIQTAHIALMEIDRVWLPTFRSWRLNERHYGSLQGKNKAQVLEEFGEEQFNSWRRGYDTPPPPLHSQADDPRYEEPPPLSESLKDVQNRLLPYWQGVILPHLVAGKVVLVVAHGNSLRALVKHLECISDTDVCQLNIPTGIPLVYSIDPSGCATHPGRYLP</sequence>
<protein>
    <recommendedName>
        <fullName evidence="1">2,3-bisphosphoglycerate-dependent phosphoglycerate mutase</fullName>
        <shortName evidence="1">BPG-dependent PGAM</shortName>
        <shortName evidence="1">PGAM</shortName>
        <shortName evidence="1">Phosphoglyceromutase</shortName>
        <shortName evidence="1">dPGM</shortName>
        <ecNumber evidence="1">5.4.2.11</ecNumber>
    </recommendedName>
</protein>
<name>GPMA_TROW8</name>
<accession>Q83HD5</accession>
<keyword id="KW-0312">Gluconeogenesis</keyword>
<keyword id="KW-0324">Glycolysis</keyword>
<keyword id="KW-0413">Isomerase</keyword>